<protein>
    <recommendedName>
        <fullName evidence="1">Hydroxyacylglutathione hydrolase</fullName>
        <ecNumber evidence="1">3.1.2.6</ecNumber>
    </recommendedName>
    <alternativeName>
        <fullName evidence="1">Glyoxalase II</fullName>
        <shortName evidence="1">Glx II</shortName>
    </alternativeName>
</protein>
<keyword id="KW-0378">Hydrolase</keyword>
<keyword id="KW-0479">Metal-binding</keyword>
<keyword id="KW-1185">Reference proteome</keyword>
<keyword id="KW-0862">Zinc</keyword>
<feature type="chain" id="PRO_0000309669" description="Hydroxyacylglutathione hydrolase">
    <location>
        <begin position="1"/>
        <end position="260"/>
    </location>
</feature>
<feature type="binding site" evidence="1">
    <location>
        <position position="61"/>
    </location>
    <ligand>
        <name>Zn(2+)</name>
        <dbReference type="ChEBI" id="CHEBI:29105"/>
        <label>1</label>
    </ligand>
</feature>
<feature type="binding site" evidence="1">
    <location>
        <position position="63"/>
    </location>
    <ligand>
        <name>Zn(2+)</name>
        <dbReference type="ChEBI" id="CHEBI:29105"/>
        <label>1</label>
    </ligand>
</feature>
<feature type="binding site" evidence="1">
    <location>
        <position position="65"/>
    </location>
    <ligand>
        <name>Zn(2+)</name>
        <dbReference type="ChEBI" id="CHEBI:29105"/>
        <label>2</label>
    </ligand>
</feature>
<feature type="binding site" evidence="1">
    <location>
        <position position="66"/>
    </location>
    <ligand>
        <name>Zn(2+)</name>
        <dbReference type="ChEBI" id="CHEBI:29105"/>
        <label>2</label>
    </ligand>
</feature>
<feature type="binding site" evidence="1">
    <location>
        <position position="119"/>
    </location>
    <ligand>
        <name>Zn(2+)</name>
        <dbReference type="ChEBI" id="CHEBI:29105"/>
        <label>1</label>
    </ligand>
</feature>
<feature type="binding site" evidence="1">
    <location>
        <position position="138"/>
    </location>
    <ligand>
        <name>Zn(2+)</name>
        <dbReference type="ChEBI" id="CHEBI:29105"/>
        <label>1</label>
    </ligand>
</feature>
<feature type="binding site" evidence="1">
    <location>
        <position position="138"/>
    </location>
    <ligand>
        <name>Zn(2+)</name>
        <dbReference type="ChEBI" id="CHEBI:29105"/>
        <label>2</label>
    </ligand>
</feature>
<feature type="binding site" evidence="1">
    <location>
        <position position="176"/>
    </location>
    <ligand>
        <name>Zn(2+)</name>
        <dbReference type="ChEBI" id="CHEBI:29105"/>
        <label>2</label>
    </ligand>
</feature>
<evidence type="ECO:0000255" key="1">
    <source>
        <dbReference type="HAMAP-Rule" id="MF_01374"/>
    </source>
</evidence>
<proteinExistence type="inferred from homology"/>
<sequence>MNSIAPRLEIEQFICRSDNYGVLIHDPQSALTASIDAPDAAAIEAALKRRGWTLDFIFTTHHHLDHVEGNEALKAKYGVSIIGPKAEETKIPGIDRTVKDGDEFTFGLFRVKVIATPGHTAGEVSYYLPDAKAVFTGDTLFALGCGRLFEGTPLTMFQSLQKLVALPGDTAVYCGHEYTESNARFALTIDPANSALKERAAEIARLRAADRMTLPSSIALEMATNPFLRWHDAGIRSRLGLQDAPDEAVFAEIRKRKDMF</sequence>
<accession>A6WXE0</accession>
<dbReference type="EC" id="3.1.2.6" evidence="1"/>
<dbReference type="EMBL" id="CP000758">
    <property type="protein sequence ID" value="ABS13644.1"/>
    <property type="molecule type" value="Genomic_DNA"/>
</dbReference>
<dbReference type="RefSeq" id="WP_012091124.1">
    <property type="nucleotide sequence ID" value="NC_009667.1"/>
</dbReference>
<dbReference type="SMR" id="A6WXE0"/>
<dbReference type="STRING" id="439375.Oant_0923"/>
<dbReference type="KEGG" id="oan:Oant_0923"/>
<dbReference type="PATRIC" id="fig|439375.7.peg.968"/>
<dbReference type="eggNOG" id="COG0491">
    <property type="taxonomic scope" value="Bacteria"/>
</dbReference>
<dbReference type="HOGENOM" id="CLU_030571_4_1_5"/>
<dbReference type="PhylomeDB" id="A6WXE0"/>
<dbReference type="UniPathway" id="UPA00619">
    <property type="reaction ID" value="UER00676"/>
</dbReference>
<dbReference type="Proteomes" id="UP000002301">
    <property type="component" value="Chromosome 1"/>
</dbReference>
<dbReference type="GO" id="GO:0004416">
    <property type="term" value="F:hydroxyacylglutathione hydrolase activity"/>
    <property type="evidence" value="ECO:0007669"/>
    <property type="project" value="UniProtKB-UniRule"/>
</dbReference>
<dbReference type="GO" id="GO:0046872">
    <property type="term" value="F:metal ion binding"/>
    <property type="evidence" value="ECO:0007669"/>
    <property type="project" value="UniProtKB-KW"/>
</dbReference>
<dbReference type="GO" id="GO:0019243">
    <property type="term" value="P:methylglyoxal catabolic process to D-lactate via S-lactoyl-glutathione"/>
    <property type="evidence" value="ECO:0007669"/>
    <property type="project" value="InterPro"/>
</dbReference>
<dbReference type="CDD" id="cd07723">
    <property type="entry name" value="hydroxyacylglutathione_hydrolase_MBL-fold"/>
    <property type="match status" value="1"/>
</dbReference>
<dbReference type="Gene3D" id="3.60.15.10">
    <property type="entry name" value="Ribonuclease Z/Hydroxyacylglutathione hydrolase-like"/>
    <property type="match status" value="1"/>
</dbReference>
<dbReference type="HAMAP" id="MF_01374">
    <property type="entry name" value="Glyoxalase_2"/>
    <property type="match status" value="1"/>
</dbReference>
<dbReference type="InterPro" id="IPR035680">
    <property type="entry name" value="Clx_II_MBL"/>
</dbReference>
<dbReference type="InterPro" id="IPR050110">
    <property type="entry name" value="Glyoxalase_II_hydrolase"/>
</dbReference>
<dbReference type="InterPro" id="IPR032282">
    <property type="entry name" value="HAGH_C"/>
</dbReference>
<dbReference type="InterPro" id="IPR017782">
    <property type="entry name" value="Hydroxyacylglutathione_Hdrlase"/>
</dbReference>
<dbReference type="InterPro" id="IPR001279">
    <property type="entry name" value="Metallo-B-lactamas"/>
</dbReference>
<dbReference type="InterPro" id="IPR036866">
    <property type="entry name" value="RibonucZ/Hydroxyglut_hydro"/>
</dbReference>
<dbReference type="NCBIfam" id="TIGR03413">
    <property type="entry name" value="GSH_gloB"/>
    <property type="match status" value="1"/>
</dbReference>
<dbReference type="PANTHER" id="PTHR43705">
    <property type="entry name" value="HYDROXYACYLGLUTATHIONE HYDROLASE"/>
    <property type="match status" value="1"/>
</dbReference>
<dbReference type="PANTHER" id="PTHR43705:SF1">
    <property type="entry name" value="HYDROXYACYLGLUTATHIONE HYDROLASE GLOB"/>
    <property type="match status" value="1"/>
</dbReference>
<dbReference type="Pfam" id="PF16123">
    <property type="entry name" value="HAGH_C"/>
    <property type="match status" value="1"/>
</dbReference>
<dbReference type="Pfam" id="PF00753">
    <property type="entry name" value="Lactamase_B"/>
    <property type="match status" value="1"/>
</dbReference>
<dbReference type="PIRSF" id="PIRSF005457">
    <property type="entry name" value="Glx"/>
    <property type="match status" value="1"/>
</dbReference>
<dbReference type="SMART" id="SM00849">
    <property type="entry name" value="Lactamase_B"/>
    <property type="match status" value="1"/>
</dbReference>
<dbReference type="SUPFAM" id="SSF56281">
    <property type="entry name" value="Metallo-hydrolase/oxidoreductase"/>
    <property type="match status" value="1"/>
</dbReference>
<gene>
    <name evidence="1" type="primary">gloB</name>
    <name type="ordered locus">Oant_0923</name>
</gene>
<organism>
    <name type="scientific">Brucella anthropi (strain ATCC 49188 / DSM 6882 / CCUG 24695 / JCM 21032 / LMG 3331 / NBRC 15819 / NCTC 12168 / Alc 37)</name>
    <name type="common">Ochrobactrum anthropi</name>
    <dbReference type="NCBI Taxonomy" id="439375"/>
    <lineage>
        <taxon>Bacteria</taxon>
        <taxon>Pseudomonadati</taxon>
        <taxon>Pseudomonadota</taxon>
        <taxon>Alphaproteobacteria</taxon>
        <taxon>Hyphomicrobiales</taxon>
        <taxon>Brucellaceae</taxon>
        <taxon>Brucella/Ochrobactrum group</taxon>
        <taxon>Brucella</taxon>
    </lineage>
</organism>
<reference key="1">
    <citation type="journal article" date="2011" name="J. Bacteriol.">
        <title>Genome of Ochrobactrum anthropi ATCC 49188 T, a versatile opportunistic pathogen and symbiont of several eukaryotic hosts.</title>
        <authorList>
            <person name="Chain P.S."/>
            <person name="Lang D.M."/>
            <person name="Comerci D.J."/>
            <person name="Malfatti S.A."/>
            <person name="Vergez L.M."/>
            <person name="Shin M."/>
            <person name="Ugalde R.A."/>
            <person name="Garcia E."/>
            <person name="Tolmasky M.E."/>
        </authorList>
    </citation>
    <scope>NUCLEOTIDE SEQUENCE [LARGE SCALE GENOMIC DNA]</scope>
    <source>
        <strain>ATCC 49188 / DSM 6882 / CCUG 24695 / JCM 21032 / LMG 3331 / NBRC 15819 / NCTC 12168 / Alc 37</strain>
    </source>
</reference>
<comment type="function">
    <text evidence="1">Thiolesterase that catalyzes the hydrolysis of S-D-lactoyl-glutathione to form glutathione and D-lactic acid.</text>
</comment>
<comment type="catalytic activity">
    <reaction evidence="1">
        <text>an S-(2-hydroxyacyl)glutathione + H2O = a 2-hydroxy carboxylate + glutathione + H(+)</text>
        <dbReference type="Rhea" id="RHEA:21864"/>
        <dbReference type="ChEBI" id="CHEBI:15377"/>
        <dbReference type="ChEBI" id="CHEBI:15378"/>
        <dbReference type="ChEBI" id="CHEBI:57925"/>
        <dbReference type="ChEBI" id="CHEBI:58896"/>
        <dbReference type="ChEBI" id="CHEBI:71261"/>
        <dbReference type="EC" id="3.1.2.6"/>
    </reaction>
</comment>
<comment type="cofactor">
    <cofactor evidence="1">
        <name>Zn(2+)</name>
        <dbReference type="ChEBI" id="CHEBI:29105"/>
    </cofactor>
    <text evidence="1">Binds 2 Zn(2+) ions per subunit.</text>
</comment>
<comment type="pathway">
    <text evidence="1">Secondary metabolite metabolism; methylglyoxal degradation; (R)-lactate from methylglyoxal: step 2/2.</text>
</comment>
<comment type="subunit">
    <text evidence="1">Monomer.</text>
</comment>
<comment type="similarity">
    <text evidence="1">Belongs to the metallo-beta-lactamase superfamily. Glyoxalase II family.</text>
</comment>
<name>GLO2_BRUA4</name>